<comment type="function">
    <text evidence="1">Component of the anaphase promoting complex/cyclosome (APC/C), a cell cycle-regulated E3 ubiquitin-protein ligase complex that controls progression through mitosis and the G1 phase of the cell cycle.</text>
</comment>
<comment type="pathway">
    <text>Protein modification; protein ubiquitination.</text>
</comment>
<comment type="subunit">
    <text evidence="1">The APC/C is composed of at least 13 subunits that stay tightly associated throughout the cell cycle: anapc1, anapc2, anapc3, anapc4, anapc5, anapc6, anapc7, anapc8, anapc10, anapc11, cdc20, cdc26 and cdh1.</text>
</comment>
<comment type="subcellular location">
    <subcellularLocation>
        <location evidence="1">Nucleus</location>
    </subcellularLocation>
</comment>
<comment type="similarity">
    <text evidence="3">Belongs to the WD repeat CDC20/Fizzy family.</text>
</comment>
<dbReference type="EMBL" id="AAFI02000099">
    <property type="protein sequence ID" value="EAL63831.1"/>
    <property type="molecule type" value="Genomic_DNA"/>
</dbReference>
<dbReference type="RefSeq" id="XP_637334.1">
    <property type="nucleotide sequence ID" value="XM_632242.1"/>
</dbReference>
<dbReference type="SMR" id="Q54KM3"/>
<dbReference type="FunCoup" id="Q54KM3">
    <property type="interactions" value="71"/>
</dbReference>
<dbReference type="STRING" id="44689.Q54KM3"/>
<dbReference type="GlyGen" id="Q54KM3">
    <property type="glycosylation" value="1 site"/>
</dbReference>
<dbReference type="PaxDb" id="44689-DDB0266709"/>
<dbReference type="EnsemblProtists" id="EAL63831">
    <property type="protein sequence ID" value="EAL63831"/>
    <property type="gene ID" value="DDB_G0287259"/>
</dbReference>
<dbReference type="GeneID" id="8626032"/>
<dbReference type="KEGG" id="ddi:DDB_G0287259"/>
<dbReference type="dictyBase" id="DDB_G0287259">
    <property type="gene designation" value="cdh1"/>
</dbReference>
<dbReference type="VEuPathDB" id="AmoebaDB:DDB_G0287259"/>
<dbReference type="eggNOG" id="KOG0305">
    <property type="taxonomic scope" value="Eukaryota"/>
</dbReference>
<dbReference type="HOGENOM" id="CLU_014831_4_1_1"/>
<dbReference type="InParanoid" id="Q54KM3"/>
<dbReference type="OMA" id="NQITVWS"/>
<dbReference type="Reactome" id="R-DDI-174084">
    <property type="pathway name" value="Autodegradation of Cdh1 by Cdh1:APC/C"/>
</dbReference>
<dbReference type="Reactome" id="R-DDI-174178">
    <property type="pathway name" value="APC/C:Cdh1 mediated degradation of Cdc20 and other APC/C:Cdh1 targeted proteins in late mitosis/early G1"/>
</dbReference>
<dbReference type="Reactome" id="R-DDI-176407">
    <property type="pathway name" value="Conversion from APC/C:Cdc20 to APC/C:Cdh1 in late anaphase"/>
</dbReference>
<dbReference type="Reactome" id="R-DDI-176408">
    <property type="pathway name" value="Regulation of APC/C activators between G1/S and early anaphase"/>
</dbReference>
<dbReference type="Reactome" id="R-DDI-2559582">
    <property type="pathway name" value="Senescence-Associated Secretory Phenotype (SASP)"/>
</dbReference>
<dbReference type="Reactome" id="R-DDI-69017">
    <property type="pathway name" value="CDK-mediated phosphorylation and removal of Cdc6"/>
</dbReference>
<dbReference type="Reactome" id="R-DDI-983168">
    <property type="pathway name" value="Antigen processing: Ubiquitination &amp; Proteasome degradation"/>
</dbReference>
<dbReference type="UniPathway" id="UPA00143"/>
<dbReference type="PRO" id="PR:Q54KM3"/>
<dbReference type="Proteomes" id="UP000002195">
    <property type="component" value="Chromosome 5"/>
</dbReference>
<dbReference type="GO" id="GO:0005680">
    <property type="term" value="C:anaphase-promoting complex"/>
    <property type="evidence" value="ECO:0000318"/>
    <property type="project" value="GO_Central"/>
</dbReference>
<dbReference type="GO" id="GO:0010997">
    <property type="term" value="F:anaphase-promoting complex binding"/>
    <property type="evidence" value="ECO:0000318"/>
    <property type="project" value="GO_Central"/>
</dbReference>
<dbReference type="GO" id="GO:1990757">
    <property type="term" value="F:ubiquitin ligase activator activity"/>
    <property type="evidence" value="ECO:0000318"/>
    <property type="project" value="GO_Central"/>
</dbReference>
<dbReference type="GO" id="GO:0031145">
    <property type="term" value="P:anaphase-promoting complex-dependent catabolic process"/>
    <property type="evidence" value="ECO:0000318"/>
    <property type="project" value="GO_Central"/>
</dbReference>
<dbReference type="GO" id="GO:0051301">
    <property type="term" value="P:cell division"/>
    <property type="evidence" value="ECO:0007669"/>
    <property type="project" value="UniProtKB-KW"/>
</dbReference>
<dbReference type="GO" id="GO:1905786">
    <property type="term" value="P:positive regulation of anaphase-promoting complex-dependent catabolic process"/>
    <property type="evidence" value="ECO:0000318"/>
    <property type="project" value="GO_Central"/>
</dbReference>
<dbReference type="GO" id="GO:0016567">
    <property type="term" value="P:protein ubiquitination"/>
    <property type="evidence" value="ECO:0007669"/>
    <property type="project" value="UniProtKB-UniPathway"/>
</dbReference>
<dbReference type="CDD" id="cd00200">
    <property type="entry name" value="WD40"/>
    <property type="match status" value="1"/>
</dbReference>
<dbReference type="Gene3D" id="2.130.10.10">
    <property type="entry name" value="YVTN repeat-like/Quinoprotein amine dehydrogenase"/>
    <property type="match status" value="1"/>
</dbReference>
<dbReference type="InterPro" id="IPR033010">
    <property type="entry name" value="Cdc20/Fizzy"/>
</dbReference>
<dbReference type="InterPro" id="IPR015943">
    <property type="entry name" value="WD40/YVTN_repeat-like_dom_sf"/>
</dbReference>
<dbReference type="InterPro" id="IPR056150">
    <property type="entry name" value="WD40_CDC20-Fz"/>
</dbReference>
<dbReference type="InterPro" id="IPR019775">
    <property type="entry name" value="WD40_repeat_CS"/>
</dbReference>
<dbReference type="InterPro" id="IPR036322">
    <property type="entry name" value="WD40_repeat_dom_sf"/>
</dbReference>
<dbReference type="InterPro" id="IPR001680">
    <property type="entry name" value="WD40_rpt"/>
</dbReference>
<dbReference type="PANTHER" id="PTHR19918">
    <property type="entry name" value="CELL DIVISION CYCLE 20 CDC20 FIZZY -RELATED"/>
    <property type="match status" value="1"/>
</dbReference>
<dbReference type="PANTHER" id="PTHR19918:SF1">
    <property type="entry name" value="FIZZY-RELATED PROTEIN HOMOLOG"/>
    <property type="match status" value="1"/>
</dbReference>
<dbReference type="Pfam" id="PF24807">
    <property type="entry name" value="WD40_CDC20-Fz"/>
    <property type="match status" value="1"/>
</dbReference>
<dbReference type="SMART" id="SM00320">
    <property type="entry name" value="WD40"/>
    <property type="match status" value="7"/>
</dbReference>
<dbReference type="SUPFAM" id="SSF50978">
    <property type="entry name" value="WD40 repeat-like"/>
    <property type="match status" value="1"/>
</dbReference>
<dbReference type="PROSITE" id="PS00678">
    <property type="entry name" value="WD_REPEATS_1"/>
    <property type="match status" value="4"/>
</dbReference>
<dbReference type="PROSITE" id="PS50082">
    <property type="entry name" value="WD_REPEATS_2"/>
    <property type="match status" value="3"/>
</dbReference>
<dbReference type="PROSITE" id="PS50294">
    <property type="entry name" value="WD_REPEATS_REGION"/>
    <property type="match status" value="1"/>
</dbReference>
<reference key="1">
    <citation type="journal article" date="2005" name="Nature">
        <title>The genome of the social amoeba Dictyostelium discoideum.</title>
        <authorList>
            <person name="Eichinger L."/>
            <person name="Pachebat J.A."/>
            <person name="Gloeckner G."/>
            <person name="Rajandream M.A."/>
            <person name="Sucgang R."/>
            <person name="Berriman M."/>
            <person name="Song J."/>
            <person name="Olsen R."/>
            <person name="Szafranski K."/>
            <person name="Xu Q."/>
            <person name="Tunggal B."/>
            <person name="Kummerfeld S."/>
            <person name="Madera M."/>
            <person name="Konfortov B.A."/>
            <person name="Rivero F."/>
            <person name="Bankier A.T."/>
            <person name="Lehmann R."/>
            <person name="Hamlin N."/>
            <person name="Davies R."/>
            <person name="Gaudet P."/>
            <person name="Fey P."/>
            <person name="Pilcher K."/>
            <person name="Chen G."/>
            <person name="Saunders D."/>
            <person name="Sodergren E.J."/>
            <person name="Davis P."/>
            <person name="Kerhornou A."/>
            <person name="Nie X."/>
            <person name="Hall N."/>
            <person name="Anjard C."/>
            <person name="Hemphill L."/>
            <person name="Bason N."/>
            <person name="Farbrother P."/>
            <person name="Desany B."/>
            <person name="Just E."/>
            <person name="Morio T."/>
            <person name="Rost R."/>
            <person name="Churcher C.M."/>
            <person name="Cooper J."/>
            <person name="Haydock S."/>
            <person name="van Driessche N."/>
            <person name="Cronin A."/>
            <person name="Goodhead I."/>
            <person name="Muzny D.M."/>
            <person name="Mourier T."/>
            <person name="Pain A."/>
            <person name="Lu M."/>
            <person name="Harper D."/>
            <person name="Lindsay R."/>
            <person name="Hauser H."/>
            <person name="James K.D."/>
            <person name="Quiles M."/>
            <person name="Madan Babu M."/>
            <person name="Saito T."/>
            <person name="Buchrieser C."/>
            <person name="Wardroper A."/>
            <person name="Felder M."/>
            <person name="Thangavelu M."/>
            <person name="Johnson D."/>
            <person name="Knights A."/>
            <person name="Loulseged H."/>
            <person name="Mungall K.L."/>
            <person name="Oliver K."/>
            <person name="Price C."/>
            <person name="Quail M.A."/>
            <person name="Urushihara H."/>
            <person name="Hernandez J."/>
            <person name="Rabbinowitsch E."/>
            <person name="Steffen D."/>
            <person name="Sanders M."/>
            <person name="Ma J."/>
            <person name="Kohara Y."/>
            <person name="Sharp S."/>
            <person name="Simmonds M.N."/>
            <person name="Spiegler S."/>
            <person name="Tivey A."/>
            <person name="Sugano S."/>
            <person name="White B."/>
            <person name="Walker D."/>
            <person name="Woodward J.R."/>
            <person name="Winckler T."/>
            <person name="Tanaka Y."/>
            <person name="Shaulsky G."/>
            <person name="Schleicher M."/>
            <person name="Weinstock G.M."/>
            <person name="Rosenthal A."/>
            <person name="Cox E.C."/>
            <person name="Chisholm R.L."/>
            <person name="Gibbs R.A."/>
            <person name="Loomis W.F."/>
            <person name="Platzer M."/>
            <person name="Kay R.R."/>
            <person name="Williams J.G."/>
            <person name="Dear P.H."/>
            <person name="Noegel A.A."/>
            <person name="Barrell B.G."/>
            <person name="Kuspa A."/>
        </authorList>
    </citation>
    <scope>NUCLEOTIDE SEQUENCE [LARGE SCALE GENOMIC DNA]</scope>
    <source>
        <strain>AX4</strain>
    </source>
</reference>
<evidence type="ECO:0000250" key="1"/>
<evidence type="ECO:0000256" key="2">
    <source>
        <dbReference type="SAM" id="MobiDB-lite"/>
    </source>
</evidence>
<evidence type="ECO:0000305" key="3"/>
<name>CDH1_DICDI</name>
<organism>
    <name type="scientific">Dictyostelium discoideum</name>
    <name type="common">Social amoeba</name>
    <dbReference type="NCBI Taxonomy" id="44689"/>
    <lineage>
        <taxon>Eukaryota</taxon>
        <taxon>Amoebozoa</taxon>
        <taxon>Evosea</taxon>
        <taxon>Eumycetozoa</taxon>
        <taxon>Dictyostelia</taxon>
        <taxon>Dictyosteliales</taxon>
        <taxon>Dictyosteliaceae</taxon>
        <taxon>Dictyostelium</taxon>
    </lineage>
</organism>
<proteinExistence type="inferred from homology"/>
<gene>
    <name type="primary">cdh1</name>
    <name type="ORF">DDB_G0287259</name>
</gene>
<feature type="chain" id="PRO_0000328535" description="Anaphase-promoting complex subunit cdh1">
    <location>
        <begin position="1"/>
        <end position="754"/>
    </location>
</feature>
<feature type="repeat" description="WD 1">
    <location>
        <begin position="411"/>
        <end position="448"/>
    </location>
</feature>
<feature type="repeat" description="WD 2">
    <location>
        <begin position="452"/>
        <end position="492"/>
    </location>
</feature>
<feature type="repeat" description="WD 3">
    <location>
        <begin position="495"/>
        <end position="532"/>
    </location>
</feature>
<feature type="repeat" description="WD 4">
    <location>
        <begin position="537"/>
        <end position="576"/>
    </location>
</feature>
<feature type="repeat" description="WD 5">
    <location>
        <begin position="610"/>
        <end position="652"/>
    </location>
</feature>
<feature type="repeat" description="WD 6">
    <location>
        <begin position="654"/>
        <end position="695"/>
    </location>
</feature>
<feature type="repeat" description="WD 7">
    <location>
        <begin position="698"/>
        <end position="737"/>
    </location>
</feature>
<feature type="region of interest" description="Disordered" evidence="2">
    <location>
        <begin position="1"/>
        <end position="30"/>
    </location>
</feature>
<feature type="region of interest" description="Disordered" evidence="2">
    <location>
        <begin position="47"/>
        <end position="116"/>
    </location>
</feature>
<feature type="region of interest" description="Disordered" evidence="2">
    <location>
        <begin position="200"/>
        <end position="351"/>
    </location>
</feature>
<feature type="region of interest" description="Disordered" evidence="2">
    <location>
        <begin position="570"/>
        <end position="598"/>
    </location>
</feature>
<feature type="compositionally biased region" description="Basic and acidic residues" evidence="2">
    <location>
        <begin position="1"/>
        <end position="10"/>
    </location>
</feature>
<feature type="compositionally biased region" description="Low complexity" evidence="2">
    <location>
        <begin position="50"/>
        <end position="116"/>
    </location>
</feature>
<feature type="compositionally biased region" description="Low complexity" evidence="2">
    <location>
        <begin position="202"/>
        <end position="325"/>
    </location>
</feature>
<feature type="compositionally biased region" description="Polar residues" evidence="2">
    <location>
        <begin position="326"/>
        <end position="339"/>
    </location>
</feature>
<feature type="compositionally biased region" description="Low complexity" evidence="2">
    <location>
        <begin position="340"/>
        <end position="351"/>
    </location>
</feature>
<feature type="compositionally biased region" description="Low complexity" evidence="2">
    <location>
        <begin position="587"/>
        <end position="598"/>
    </location>
</feature>
<keyword id="KW-0131">Cell cycle</keyword>
<keyword id="KW-0132">Cell division</keyword>
<keyword id="KW-0498">Mitosis</keyword>
<keyword id="KW-0539">Nucleus</keyword>
<keyword id="KW-1185">Reference proteome</keyword>
<keyword id="KW-0677">Repeat</keyword>
<keyword id="KW-0833">Ubl conjugation pathway</keyword>
<keyword id="KW-0853">WD repeat</keyword>
<protein>
    <recommendedName>
        <fullName>Anaphase-promoting complex subunit cdh1</fullName>
    </recommendedName>
</protein>
<sequence length="754" mass="83786">MFHSEYEKKLRSPSKSPGSKTNYYNNYSNNNNNTPIPLPLSIFHSTYEDNGSNNNNNNNNNNINLNSNNNNNNSNNSGSNINNNITTPIKSTSTTTTTTTTPITTPTTTTTTTTTTPSYDSYGDRFIPLSIGLESQNNYSFDESSYEYLYCYPSENSYTIDKQRDESHLAYNIVLKNELLGSSLSSNFFDSPSSIYKSSIFNNNNNNNNNNNNNNNNNNNNNNNNHVNNNNNNNNNNNIDTPTNNNNNNNNNNNNNNVNINDTTATTTTTTTTNTNIPTTTTNATNNNNNNSNNTTTTTTTTTNTTNTTNTNTNTNTNNNLININQSPSKKQSLMSATMNNNNSNNNNNNNFGILKYNQKQKSTMSNHLDCSPYSLSLLSDDSQKLLSSPRKPQRKISKTPIKILDAPMIKDDFYLNLIDWSSHNILAVGLDTSVYLWNATTSQVSKLCEMESGQPVSSVGWIQRGGIHLAIGGTDGVVSIWDVNKKKKIRELQGHNTRVNALAWNNHILSSGGKDKVILHHDVRDCSNNYTNRLVGHRHEICGLKWSPDGQQLASGGNDNLLNVWDHSMTQQPQQQHQPPPPPPSSNTSSISQQQQQQNTSKPLYQFKFHYAAVKAIAWSPHQRGLLASGGGTHDKCIRFWNTTTGQSIQSIDTGSQVCNLAWSKNINELVSTHGYSQNQITVWNYPTMTPVTTLTGHTMRVLYLAVSPDGQTVCTGAGDNSLRFWNLFPSNKESSFSSNLDSFYNKKGLDIR</sequence>
<accession>Q54KM3</accession>